<name>DTD_HAEIE</name>
<keyword id="KW-0963">Cytoplasm</keyword>
<keyword id="KW-0378">Hydrolase</keyword>
<keyword id="KW-0694">RNA-binding</keyword>
<keyword id="KW-0820">tRNA-binding</keyword>
<sequence>MIALIQRVSQAKVDVNGETIGKIGKGLLVLLGVEKEDNREKADKLAEKVLNYRIFSDENDKMNLNVQQAQGELLIVSQFTLAADTQKGLRPSFSKGAPPALANELYEYFIQKCAGKLPVSTGQFAADMQVSLTNDGPVTFWLNV</sequence>
<evidence type="ECO:0000255" key="1">
    <source>
        <dbReference type="HAMAP-Rule" id="MF_00518"/>
    </source>
</evidence>
<dbReference type="EC" id="3.1.1.96" evidence="1"/>
<dbReference type="EMBL" id="CP000671">
    <property type="protein sequence ID" value="ABQ99062.1"/>
    <property type="molecule type" value="Genomic_DNA"/>
</dbReference>
<dbReference type="SMR" id="A5UE61"/>
<dbReference type="KEGG" id="hip:CGSHiEE_08825"/>
<dbReference type="HOGENOM" id="CLU_076901_1_1_6"/>
<dbReference type="GO" id="GO:0005737">
    <property type="term" value="C:cytoplasm"/>
    <property type="evidence" value="ECO:0007669"/>
    <property type="project" value="UniProtKB-SubCell"/>
</dbReference>
<dbReference type="GO" id="GO:0051500">
    <property type="term" value="F:D-tyrosyl-tRNA(Tyr) deacylase activity"/>
    <property type="evidence" value="ECO:0007669"/>
    <property type="project" value="TreeGrafter"/>
</dbReference>
<dbReference type="GO" id="GO:0106026">
    <property type="term" value="F:Gly-tRNA(Ala) deacylase activity"/>
    <property type="evidence" value="ECO:0007669"/>
    <property type="project" value="UniProtKB-UniRule"/>
</dbReference>
<dbReference type="GO" id="GO:0043908">
    <property type="term" value="F:Ser(Gly)-tRNA(Ala) hydrolase activity"/>
    <property type="evidence" value="ECO:0007669"/>
    <property type="project" value="UniProtKB-UniRule"/>
</dbReference>
<dbReference type="GO" id="GO:0000049">
    <property type="term" value="F:tRNA binding"/>
    <property type="evidence" value="ECO:0007669"/>
    <property type="project" value="UniProtKB-UniRule"/>
</dbReference>
<dbReference type="GO" id="GO:0019478">
    <property type="term" value="P:D-amino acid catabolic process"/>
    <property type="evidence" value="ECO:0007669"/>
    <property type="project" value="UniProtKB-UniRule"/>
</dbReference>
<dbReference type="CDD" id="cd00563">
    <property type="entry name" value="Dtyr_deacylase"/>
    <property type="match status" value="1"/>
</dbReference>
<dbReference type="FunFam" id="3.50.80.10:FF:000001">
    <property type="entry name" value="D-aminoacyl-tRNA deacylase"/>
    <property type="match status" value="1"/>
</dbReference>
<dbReference type="Gene3D" id="3.50.80.10">
    <property type="entry name" value="D-tyrosyl-tRNA(Tyr) deacylase"/>
    <property type="match status" value="1"/>
</dbReference>
<dbReference type="HAMAP" id="MF_00518">
    <property type="entry name" value="Deacylase_Dtd"/>
    <property type="match status" value="1"/>
</dbReference>
<dbReference type="InterPro" id="IPR003732">
    <property type="entry name" value="Daa-tRNA_deacyls_DTD"/>
</dbReference>
<dbReference type="InterPro" id="IPR023509">
    <property type="entry name" value="DTD-like_sf"/>
</dbReference>
<dbReference type="NCBIfam" id="TIGR00256">
    <property type="entry name" value="D-aminoacyl-tRNA deacylase"/>
    <property type="match status" value="1"/>
</dbReference>
<dbReference type="PANTHER" id="PTHR10472:SF5">
    <property type="entry name" value="D-AMINOACYL-TRNA DEACYLASE 1"/>
    <property type="match status" value="1"/>
</dbReference>
<dbReference type="PANTHER" id="PTHR10472">
    <property type="entry name" value="D-TYROSYL-TRNA TYR DEACYLASE"/>
    <property type="match status" value="1"/>
</dbReference>
<dbReference type="Pfam" id="PF02580">
    <property type="entry name" value="Tyr_Deacylase"/>
    <property type="match status" value="1"/>
</dbReference>
<dbReference type="SUPFAM" id="SSF69500">
    <property type="entry name" value="DTD-like"/>
    <property type="match status" value="1"/>
</dbReference>
<protein>
    <recommendedName>
        <fullName evidence="1">D-aminoacyl-tRNA deacylase</fullName>
        <shortName evidence="1">DTD</shortName>
        <ecNumber evidence="1">3.1.1.96</ecNumber>
    </recommendedName>
    <alternativeName>
        <fullName evidence="1">Gly-tRNA(Ala) deacylase</fullName>
    </alternativeName>
</protein>
<gene>
    <name evidence="1" type="primary">dtd</name>
    <name type="ordered locus">CGSHiEE_08825</name>
</gene>
<proteinExistence type="inferred from homology"/>
<accession>A5UE61</accession>
<reference key="1">
    <citation type="journal article" date="2007" name="Genome Biol.">
        <title>Characterization and modeling of the Haemophilus influenzae core and supragenomes based on the complete genomic sequences of Rd and 12 clinical nontypeable strains.</title>
        <authorList>
            <person name="Hogg J.S."/>
            <person name="Hu F.Z."/>
            <person name="Janto B."/>
            <person name="Boissy R."/>
            <person name="Hayes J."/>
            <person name="Keefe R."/>
            <person name="Post J.C."/>
            <person name="Ehrlich G.D."/>
        </authorList>
    </citation>
    <scope>NUCLEOTIDE SEQUENCE [LARGE SCALE GENOMIC DNA]</scope>
    <source>
        <strain>PittEE</strain>
    </source>
</reference>
<feature type="chain" id="PRO_1000050836" description="D-aminoacyl-tRNA deacylase">
    <location>
        <begin position="1"/>
        <end position="144"/>
    </location>
</feature>
<feature type="short sequence motif" description="Gly-cisPro motif, important for rejection of L-amino acids" evidence="1">
    <location>
        <begin position="136"/>
        <end position="137"/>
    </location>
</feature>
<comment type="function">
    <text evidence="1">An aminoacyl-tRNA editing enzyme that deacylates mischarged D-aminoacyl-tRNAs. Also deacylates mischarged glycyl-tRNA(Ala), protecting cells against glycine mischarging by AlaRS. Acts via tRNA-based rather than protein-based catalysis; rejects L-amino acids rather than detecting D-amino acids in the active site. By recycling D-aminoacyl-tRNA to D-amino acids and free tRNA molecules, this enzyme counteracts the toxicity associated with the formation of D-aminoacyl-tRNA entities in vivo and helps enforce protein L-homochirality.</text>
</comment>
<comment type="catalytic activity">
    <reaction evidence="1">
        <text>glycyl-tRNA(Ala) + H2O = tRNA(Ala) + glycine + H(+)</text>
        <dbReference type="Rhea" id="RHEA:53744"/>
        <dbReference type="Rhea" id="RHEA-COMP:9657"/>
        <dbReference type="Rhea" id="RHEA-COMP:13640"/>
        <dbReference type="ChEBI" id="CHEBI:15377"/>
        <dbReference type="ChEBI" id="CHEBI:15378"/>
        <dbReference type="ChEBI" id="CHEBI:57305"/>
        <dbReference type="ChEBI" id="CHEBI:78442"/>
        <dbReference type="ChEBI" id="CHEBI:78522"/>
        <dbReference type="EC" id="3.1.1.96"/>
    </reaction>
</comment>
<comment type="catalytic activity">
    <reaction evidence="1">
        <text>a D-aminoacyl-tRNA + H2O = a tRNA + a D-alpha-amino acid + H(+)</text>
        <dbReference type="Rhea" id="RHEA:13953"/>
        <dbReference type="Rhea" id="RHEA-COMP:10123"/>
        <dbReference type="Rhea" id="RHEA-COMP:10124"/>
        <dbReference type="ChEBI" id="CHEBI:15377"/>
        <dbReference type="ChEBI" id="CHEBI:15378"/>
        <dbReference type="ChEBI" id="CHEBI:59871"/>
        <dbReference type="ChEBI" id="CHEBI:78442"/>
        <dbReference type="ChEBI" id="CHEBI:79333"/>
        <dbReference type="EC" id="3.1.1.96"/>
    </reaction>
</comment>
<comment type="subunit">
    <text evidence="1">Homodimer.</text>
</comment>
<comment type="subcellular location">
    <subcellularLocation>
        <location evidence="1">Cytoplasm</location>
    </subcellularLocation>
</comment>
<comment type="domain">
    <text evidence="1">A Gly-cisPro motif from one monomer fits into the active site of the other monomer to allow specific chiral rejection of L-amino acids.</text>
</comment>
<comment type="similarity">
    <text evidence="1">Belongs to the DTD family.</text>
</comment>
<organism>
    <name type="scientific">Haemophilus influenzae (strain PittEE)</name>
    <dbReference type="NCBI Taxonomy" id="374930"/>
    <lineage>
        <taxon>Bacteria</taxon>
        <taxon>Pseudomonadati</taxon>
        <taxon>Pseudomonadota</taxon>
        <taxon>Gammaproteobacteria</taxon>
        <taxon>Pasteurellales</taxon>
        <taxon>Pasteurellaceae</taxon>
        <taxon>Haemophilus</taxon>
    </lineage>
</organism>